<comment type="function">
    <text evidence="1">Could be a mediator in iron transactions between iron acquisition and iron-requiring processes, such as synthesis and/or repair of Fe-S clusters in biosynthetic enzymes.</text>
</comment>
<comment type="subunit">
    <text evidence="1">Monomer.</text>
</comment>
<comment type="similarity">
    <text evidence="1">Belongs to the Fe(2+)-trafficking protein family.</text>
</comment>
<organism>
    <name type="scientific">Edwardsiella ictaluri (strain 93-146)</name>
    <dbReference type="NCBI Taxonomy" id="634503"/>
    <lineage>
        <taxon>Bacteria</taxon>
        <taxon>Pseudomonadati</taxon>
        <taxon>Pseudomonadota</taxon>
        <taxon>Gammaproteobacteria</taxon>
        <taxon>Enterobacterales</taxon>
        <taxon>Hafniaceae</taxon>
        <taxon>Edwardsiella</taxon>
    </lineage>
</organism>
<proteinExistence type="inferred from homology"/>
<gene>
    <name type="ordered locus">NT01EI_0271</name>
</gene>
<name>FETP_EDWI9</name>
<reference key="1">
    <citation type="submission" date="2009-03" db="EMBL/GenBank/DDBJ databases">
        <title>Complete genome sequence of Edwardsiella ictaluri 93-146.</title>
        <authorList>
            <person name="Williams M.L."/>
            <person name="Gillaspy A.F."/>
            <person name="Dyer D.W."/>
            <person name="Thune R.L."/>
            <person name="Waldbieser G.C."/>
            <person name="Schuster S.C."/>
            <person name="Gipson J."/>
            <person name="Zaitshik J."/>
            <person name="Landry C."/>
            <person name="Lawrence M.L."/>
        </authorList>
    </citation>
    <scope>NUCLEOTIDE SEQUENCE [LARGE SCALE GENOMIC DNA]</scope>
    <source>
        <strain>93-146</strain>
    </source>
</reference>
<protein>
    <recommendedName>
        <fullName evidence="1">Probable Fe(2+)-trafficking protein</fullName>
    </recommendedName>
</protein>
<evidence type="ECO:0000255" key="1">
    <source>
        <dbReference type="HAMAP-Rule" id="MF_00686"/>
    </source>
</evidence>
<keyword id="KW-0408">Iron</keyword>
<accession>C5BCF0</accession>
<sequence>MSRTVFCTFLNREAEGLDFQSYPGDLGKRIYDHISKEAWGQWMAKQTMLINEKKLNMMNPDDRSLLAREMEKFLFEGHDVHIEGYTPPNQ</sequence>
<dbReference type="EMBL" id="CP001600">
    <property type="protein sequence ID" value="ACR67513.1"/>
    <property type="molecule type" value="Genomic_DNA"/>
</dbReference>
<dbReference type="RefSeq" id="WP_015869722.1">
    <property type="nucleotide sequence ID" value="NZ_CP169062.1"/>
</dbReference>
<dbReference type="SMR" id="C5BCF0"/>
<dbReference type="STRING" id="67780.B6E78_12460"/>
<dbReference type="KEGG" id="eic:NT01EI_0271"/>
<dbReference type="PATRIC" id="fig|634503.3.peg.243"/>
<dbReference type="HOGENOM" id="CLU_170994_0_0_6"/>
<dbReference type="OrthoDB" id="9804318at2"/>
<dbReference type="Proteomes" id="UP000001485">
    <property type="component" value="Chromosome"/>
</dbReference>
<dbReference type="GO" id="GO:0005829">
    <property type="term" value="C:cytosol"/>
    <property type="evidence" value="ECO:0007669"/>
    <property type="project" value="TreeGrafter"/>
</dbReference>
<dbReference type="GO" id="GO:0005506">
    <property type="term" value="F:iron ion binding"/>
    <property type="evidence" value="ECO:0007669"/>
    <property type="project" value="UniProtKB-UniRule"/>
</dbReference>
<dbReference type="GO" id="GO:0034599">
    <property type="term" value="P:cellular response to oxidative stress"/>
    <property type="evidence" value="ECO:0007669"/>
    <property type="project" value="TreeGrafter"/>
</dbReference>
<dbReference type="FunFam" id="1.10.3880.10:FF:000001">
    <property type="entry name" value="Probable Fe(2+)-trafficking protein"/>
    <property type="match status" value="1"/>
</dbReference>
<dbReference type="Gene3D" id="1.10.3880.10">
    <property type="entry name" value="Fe(II) trafficking protein YggX"/>
    <property type="match status" value="1"/>
</dbReference>
<dbReference type="HAMAP" id="MF_00686">
    <property type="entry name" value="Fe_traffic_YggX"/>
    <property type="match status" value="1"/>
</dbReference>
<dbReference type="InterPro" id="IPR007457">
    <property type="entry name" value="Fe_traffick_prot_YggX"/>
</dbReference>
<dbReference type="InterPro" id="IPR036766">
    <property type="entry name" value="Fe_traffick_prot_YggX_sf"/>
</dbReference>
<dbReference type="NCBIfam" id="NF003817">
    <property type="entry name" value="PRK05408.1"/>
    <property type="match status" value="1"/>
</dbReference>
<dbReference type="PANTHER" id="PTHR36965">
    <property type="entry name" value="FE(2+)-TRAFFICKING PROTEIN-RELATED"/>
    <property type="match status" value="1"/>
</dbReference>
<dbReference type="PANTHER" id="PTHR36965:SF1">
    <property type="entry name" value="FE(2+)-TRAFFICKING PROTEIN-RELATED"/>
    <property type="match status" value="1"/>
</dbReference>
<dbReference type="Pfam" id="PF04362">
    <property type="entry name" value="Iron_traffic"/>
    <property type="match status" value="1"/>
</dbReference>
<dbReference type="PIRSF" id="PIRSF029827">
    <property type="entry name" value="Fe_traffic_YggX"/>
    <property type="match status" value="1"/>
</dbReference>
<dbReference type="SUPFAM" id="SSF111148">
    <property type="entry name" value="YggX-like"/>
    <property type="match status" value="1"/>
</dbReference>
<feature type="chain" id="PRO_1000212553" description="Probable Fe(2+)-trafficking protein">
    <location>
        <begin position="1"/>
        <end position="90"/>
    </location>
</feature>